<feature type="chain" id="PRO_0000105684" description="Small neutral protease regulatory protein">
    <location>
        <begin position="1"/>
        <end position="328"/>
    </location>
</feature>
<feature type="domain" description="HTH lysR-type" evidence="1">
    <location>
        <begin position="1"/>
        <end position="60"/>
    </location>
</feature>
<feature type="DNA-binding region" description="H-T-H motif" evidence="1">
    <location>
        <begin position="20"/>
        <end position="39"/>
    </location>
</feature>
<gene>
    <name type="primary">mprR</name>
    <name type="synonym">mprR2</name>
    <name type="ordered locus">SCO7433</name>
    <name type="ORF">SC6D11.29</name>
</gene>
<name>MPRR2_STRCO</name>
<proteinExistence type="inferred from homology"/>
<organism>
    <name type="scientific">Streptomyces coelicolor (strain ATCC BAA-471 / A3(2) / M145)</name>
    <dbReference type="NCBI Taxonomy" id="100226"/>
    <lineage>
        <taxon>Bacteria</taxon>
        <taxon>Bacillati</taxon>
        <taxon>Actinomycetota</taxon>
        <taxon>Actinomycetes</taxon>
        <taxon>Kitasatosporales</taxon>
        <taxon>Streptomycetaceae</taxon>
        <taxon>Streptomyces</taxon>
        <taxon>Streptomyces albidoflavus group</taxon>
    </lineage>
</organism>
<evidence type="ECO:0000255" key="1">
    <source>
        <dbReference type="PROSITE-ProRule" id="PRU00253"/>
    </source>
</evidence>
<evidence type="ECO:0000305" key="2"/>
<comment type="function">
    <text>Transcriptional trans-activator of the gene (mprA) for the small neutral protease.</text>
</comment>
<comment type="similarity">
    <text evidence="2">Belongs to the LysR transcriptional regulatory family.</text>
</comment>
<keyword id="KW-0238">DNA-binding</keyword>
<keyword id="KW-1185">Reference proteome</keyword>
<keyword id="KW-0804">Transcription</keyword>
<keyword id="KW-0805">Transcription regulation</keyword>
<dbReference type="EMBL" id="AL939131">
    <property type="protein sequence ID" value="CAB76352.1"/>
    <property type="molecule type" value="Genomic_DNA"/>
</dbReference>
<dbReference type="RefSeq" id="NP_631482.1">
    <property type="nucleotide sequence ID" value="NC_003888.3"/>
</dbReference>
<dbReference type="RefSeq" id="WP_011031660.1">
    <property type="nucleotide sequence ID" value="NZ_VNID01000005.1"/>
</dbReference>
<dbReference type="SMR" id="Q9L127"/>
<dbReference type="STRING" id="100226.gene:17765093"/>
<dbReference type="PaxDb" id="100226-SCO7433"/>
<dbReference type="KEGG" id="sco:SCO7433"/>
<dbReference type="PATRIC" id="fig|100226.15.peg.7543"/>
<dbReference type="eggNOG" id="COG0583">
    <property type="taxonomic scope" value="Bacteria"/>
</dbReference>
<dbReference type="HOGENOM" id="CLU_039613_6_4_11"/>
<dbReference type="InParanoid" id="Q9L127"/>
<dbReference type="OrthoDB" id="3171102at2"/>
<dbReference type="PhylomeDB" id="Q9L127"/>
<dbReference type="Proteomes" id="UP000001973">
    <property type="component" value="Chromosome"/>
</dbReference>
<dbReference type="GO" id="GO:0032993">
    <property type="term" value="C:protein-DNA complex"/>
    <property type="evidence" value="ECO:0000318"/>
    <property type="project" value="GO_Central"/>
</dbReference>
<dbReference type="GO" id="GO:0003677">
    <property type="term" value="F:DNA binding"/>
    <property type="evidence" value="ECO:0007669"/>
    <property type="project" value="UniProtKB-KW"/>
</dbReference>
<dbReference type="GO" id="GO:0003700">
    <property type="term" value="F:DNA-binding transcription factor activity"/>
    <property type="evidence" value="ECO:0000318"/>
    <property type="project" value="GO_Central"/>
</dbReference>
<dbReference type="GO" id="GO:0006355">
    <property type="term" value="P:regulation of DNA-templated transcription"/>
    <property type="evidence" value="ECO:0000318"/>
    <property type="project" value="GO_Central"/>
</dbReference>
<dbReference type="CDD" id="cd08414">
    <property type="entry name" value="PBP2_LTTR_aromatics_like"/>
    <property type="match status" value="1"/>
</dbReference>
<dbReference type="Gene3D" id="3.40.190.10">
    <property type="entry name" value="Periplasmic binding protein-like II"/>
    <property type="match status" value="2"/>
</dbReference>
<dbReference type="Gene3D" id="1.10.10.10">
    <property type="entry name" value="Winged helix-like DNA-binding domain superfamily/Winged helix DNA-binding domain"/>
    <property type="match status" value="1"/>
</dbReference>
<dbReference type="InterPro" id="IPR005119">
    <property type="entry name" value="LysR_subst-bd"/>
</dbReference>
<dbReference type="InterPro" id="IPR000847">
    <property type="entry name" value="Tscrpt_reg_HTH_LysR"/>
</dbReference>
<dbReference type="InterPro" id="IPR036388">
    <property type="entry name" value="WH-like_DNA-bd_sf"/>
</dbReference>
<dbReference type="InterPro" id="IPR036390">
    <property type="entry name" value="WH_DNA-bd_sf"/>
</dbReference>
<dbReference type="PANTHER" id="PTHR30346:SF30">
    <property type="entry name" value="SMALL NEUTRAL PROTEASE REGULATORY PROTEIN"/>
    <property type="match status" value="1"/>
</dbReference>
<dbReference type="PANTHER" id="PTHR30346">
    <property type="entry name" value="TRANSCRIPTIONAL DUAL REGULATOR HCAR-RELATED"/>
    <property type="match status" value="1"/>
</dbReference>
<dbReference type="Pfam" id="PF00126">
    <property type="entry name" value="HTH_1"/>
    <property type="match status" value="1"/>
</dbReference>
<dbReference type="Pfam" id="PF03466">
    <property type="entry name" value="LysR_substrate"/>
    <property type="match status" value="1"/>
</dbReference>
<dbReference type="PRINTS" id="PR00039">
    <property type="entry name" value="HTHLYSR"/>
</dbReference>
<dbReference type="SUPFAM" id="SSF53850">
    <property type="entry name" value="Periplasmic binding protein-like II"/>
    <property type="match status" value="1"/>
</dbReference>
<dbReference type="SUPFAM" id="SSF46785">
    <property type="entry name" value="Winged helix' DNA-binding domain"/>
    <property type="match status" value="1"/>
</dbReference>
<dbReference type="PROSITE" id="PS50931">
    <property type="entry name" value="HTH_LYSR"/>
    <property type="match status" value="1"/>
</dbReference>
<accession>Q9L127</accession>
<sequence>MELEVRHLRALCAIADAGSLHRAARRLGVAQPTLSTQLTRIEQALGGPLFTRERTGCRPTPLGRTVLGRARPLLTDMNTLVREARAAAAGGDSRLRVGSTASRALAGWLRRLRRPGLEPTLQMDVSANALLRRVTDGQLDVAFVHEVEGCALHIPEDLRLRVLVEREPQFVMLPADHPAAARPVVRLADLADDRWMVDPTVDGEWDGVHRMLRAVGLNPRVLHGDYHTAASLVATGEVVTVCQPSSQSRPDTAVRRLYGDPLGVRLLLAARTRAELDAVFPALEDAYWEAARQSTAYREWLEGGGIRTLPRCPVAATGGGRVEFVRAR</sequence>
<protein>
    <recommendedName>
        <fullName>Small neutral protease regulatory protein</fullName>
    </recommendedName>
</protein>
<reference key="1">
    <citation type="journal article" date="2002" name="Nature">
        <title>Complete genome sequence of the model actinomycete Streptomyces coelicolor A3(2).</title>
        <authorList>
            <person name="Bentley S.D."/>
            <person name="Chater K.F."/>
            <person name="Cerdeno-Tarraga A.-M."/>
            <person name="Challis G.L."/>
            <person name="Thomson N.R."/>
            <person name="James K.D."/>
            <person name="Harris D.E."/>
            <person name="Quail M.A."/>
            <person name="Kieser H."/>
            <person name="Harper D."/>
            <person name="Bateman A."/>
            <person name="Brown S."/>
            <person name="Chandra G."/>
            <person name="Chen C.W."/>
            <person name="Collins M."/>
            <person name="Cronin A."/>
            <person name="Fraser A."/>
            <person name="Goble A."/>
            <person name="Hidalgo J."/>
            <person name="Hornsby T."/>
            <person name="Howarth S."/>
            <person name="Huang C.-H."/>
            <person name="Kieser T."/>
            <person name="Larke L."/>
            <person name="Murphy L.D."/>
            <person name="Oliver K."/>
            <person name="O'Neil S."/>
            <person name="Rabbinowitsch E."/>
            <person name="Rajandream M.A."/>
            <person name="Rutherford K.M."/>
            <person name="Rutter S."/>
            <person name="Seeger K."/>
            <person name="Saunders D."/>
            <person name="Sharp S."/>
            <person name="Squares R."/>
            <person name="Squares S."/>
            <person name="Taylor K."/>
            <person name="Warren T."/>
            <person name="Wietzorrek A."/>
            <person name="Woodward J.R."/>
            <person name="Barrell B.G."/>
            <person name="Parkhill J."/>
            <person name="Hopwood D.A."/>
        </authorList>
    </citation>
    <scope>NUCLEOTIDE SEQUENCE [LARGE SCALE GENOMIC DNA]</scope>
    <source>
        <strain>ATCC BAA-471 / A3(2) / M145</strain>
    </source>
</reference>